<reference key="1">
    <citation type="submission" date="2008-01" db="EMBL/GenBank/DDBJ databases">
        <title>Complete sequence of Thermoanaerobacter pseudethanolicus 39E.</title>
        <authorList>
            <person name="Copeland A."/>
            <person name="Lucas S."/>
            <person name="Lapidus A."/>
            <person name="Barry K."/>
            <person name="Glavina del Rio T."/>
            <person name="Dalin E."/>
            <person name="Tice H."/>
            <person name="Pitluck S."/>
            <person name="Bruce D."/>
            <person name="Goodwin L."/>
            <person name="Saunders E."/>
            <person name="Brettin T."/>
            <person name="Detter J.C."/>
            <person name="Han C."/>
            <person name="Schmutz J."/>
            <person name="Larimer F."/>
            <person name="Land M."/>
            <person name="Hauser L."/>
            <person name="Kyrpides N."/>
            <person name="Lykidis A."/>
            <person name="Hemme C."/>
            <person name="Fields M.W."/>
            <person name="He Z."/>
            <person name="Zhou J."/>
            <person name="Richardson P."/>
        </authorList>
    </citation>
    <scope>NUCLEOTIDE SEQUENCE [LARGE SCALE GENOMIC DNA]</scope>
    <source>
        <strain>ATCC 33223 / DSM 2355 / 39E</strain>
    </source>
</reference>
<comment type="function">
    <text evidence="1">Reversibly transfers an adenylyl group from ATP to 4'-phosphopantetheine, yielding dephospho-CoA (dPCoA) and pyrophosphate.</text>
</comment>
<comment type="catalytic activity">
    <reaction evidence="1">
        <text>(R)-4'-phosphopantetheine + ATP + H(+) = 3'-dephospho-CoA + diphosphate</text>
        <dbReference type="Rhea" id="RHEA:19801"/>
        <dbReference type="ChEBI" id="CHEBI:15378"/>
        <dbReference type="ChEBI" id="CHEBI:30616"/>
        <dbReference type="ChEBI" id="CHEBI:33019"/>
        <dbReference type="ChEBI" id="CHEBI:57328"/>
        <dbReference type="ChEBI" id="CHEBI:61723"/>
        <dbReference type="EC" id="2.7.7.3"/>
    </reaction>
</comment>
<comment type="cofactor">
    <cofactor evidence="1">
        <name>Mg(2+)</name>
        <dbReference type="ChEBI" id="CHEBI:18420"/>
    </cofactor>
</comment>
<comment type="pathway">
    <text evidence="1">Cofactor biosynthesis; coenzyme A biosynthesis; CoA from (R)-pantothenate: step 4/5.</text>
</comment>
<comment type="subunit">
    <text evidence="1">Homohexamer.</text>
</comment>
<comment type="subcellular location">
    <subcellularLocation>
        <location evidence="1">Cytoplasm</location>
    </subcellularLocation>
</comment>
<comment type="similarity">
    <text evidence="1">Belongs to the bacterial CoaD family.</text>
</comment>
<accession>B0K9Z1</accession>
<name>COAD_THEP3</name>
<sequence>MKTAIYPGSFDPVTYGHIDIIERGANLFDKLIVAVLLNPSKKPLFSVEERVELLKAVTYDISNVEIDYFDGLLVDYAKKVKANAIIKGLRMVSDFEYEFQMALINKKLNPSLETIFLMTNAKYGYLSSSVVKEIAQFGGCLSEFVPDIVAQKLMEKFSR</sequence>
<dbReference type="EC" id="2.7.7.3" evidence="1"/>
<dbReference type="EMBL" id="CP000924">
    <property type="protein sequence ID" value="ABY94954.1"/>
    <property type="molecule type" value="Genomic_DNA"/>
</dbReference>
<dbReference type="RefSeq" id="WP_003868229.1">
    <property type="nucleotide sequence ID" value="NC_010321.1"/>
</dbReference>
<dbReference type="SMR" id="B0K9Z1"/>
<dbReference type="STRING" id="340099.Teth39_1300"/>
<dbReference type="KEGG" id="tpd:Teth39_1300"/>
<dbReference type="eggNOG" id="COG0669">
    <property type="taxonomic scope" value="Bacteria"/>
</dbReference>
<dbReference type="HOGENOM" id="CLU_100149_0_1_9"/>
<dbReference type="UniPathway" id="UPA00241">
    <property type="reaction ID" value="UER00355"/>
</dbReference>
<dbReference type="Proteomes" id="UP000002156">
    <property type="component" value="Chromosome"/>
</dbReference>
<dbReference type="GO" id="GO:0005737">
    <property type="term" value="C:cytoplasm"/>
    <property type="evidence" value="ECO:0007669"/>
    <property type="project" value="UniProtKB-SubCell"/>
</dbReference>
<dbReference type="GO" id="GO:0005524">
    <property type="term" value="F:ATP binding"/>
    <property type="evidence" value="ECO:0007669"/>
    <property type="project" value="UniProtKB-KW"/>
</dbReference>
<dbReference type="GO" id="GO:0004595">
    <property type="term" value="F:pantetheine-phosphate adenylyltransferase activity"/>
    <property type="evidence" value="ECO:0007669"/>
    <property type="project" value="UniProtKB-UniRule"/>
</dbReference>
<dbReference type="GO" id="GO:0015937">
    <property type="term" value="P:coenzyme A biosynthetic process"/>
    <property type="evidence" value="ECO:0007669"/>
    <property type="project" value="UniProtKB-UniRule"/>
</dbReference>
<dbReference type="CDD" id="cd02163">
    <property type="entry name" value="PPAT"/>
    <property type="match status" value="1"/>
</dbReference>
<dbReference type="Gene3D" id="3.40.50.620">
    <property type="entry name" value="HUPs"/>
    <property type="match status" value="1"/>
</dbReference>
<dbReference type="HAMAP" id="MF_00151">
    <property type="entry name" value="PPAT_bact"/>
    <property type="match status" value="1"/>
</dbReference>
<dbReference type="InterPro" id="IPR004821">
    <property type="entry name" value="Cyt_trans-like"/>
</dbReference>
<dbReference type="InterPro" id="IPR001980">
    <property type="entry name" value="PPAT"/>
</dbReference>
<dbReference type="InterPro" id="IPR014729">
    <property type="entry name" value="Rossmann-like_a/b/a_fold"/>
</dbReference>
<dbReference type="NCBIfam" id="TIGR01510">
    <property type="entry name" value="coaD_prev_kdtB"/>
    <property type="match status" value="1"/>
</dbReference>
<dbReference type="NCBIfam" id="TIGR00125">
    <property type="entry name" value="cyt_tran_rel"/>
    <property type="match status" value="1"/>
</dbReference>
<dbReference type="PANTHER" id="PTHR21342">
    <property type="entry name" value="PHOSPHOPANTETHEINE ADENYLYLTRANSFERASE"/>
    <property type="match status" value="1"/>
</dbReference>
<dbReference type="PANTHER" id="PTHR21342:SF1">
    <property type="entry name" value="PHOSPHOPANTETHEINE ADENYLYLTRANSFERASE"/>
    <property type="match status" value="1"/>
</dbReference>
<dbReference type="Pfam" id="PF01467">
    <property type="entry name" value="CTP_transf_like"/>
    <property type="match status" value="1"/>
</dbReference>
<dbReference type="PRINTS" id="PR01020">
    <property type="entry name" value="LPSBIOSNTHSS"/>
</dbReference>
<dbReference type="SUPFAM" id="SSF52374">
    <property type="entry name" value="Nucleotidylyl transferase"/>
    <property type="match status" value="1"/>
</dbReference>
<evidence type="ECO:0000255" key="1">
    <source>
        <dbReference type="HAMAP-Rule" id="MF_00151"/>
    </source>
</evidence>
<feature type="chain" id="PRO_1000096852" description="Phosphopantetheine adenylyltransferase">
    <location>
        <begin position="1"/>
        <end position="159"/>
    </location>
</feature>
<feature type="binding site" evidence="1">
    <location>
        <begin position="9"/>
        <end position="10"/>
    </location>
    <ligand>
        <name>ATP</name>
        <dbReference type="ChEBI" id="CHEBI:30616"/>
    </ligand>
</feature>
<feature type="binding site" evidence="1">
    <location>
        <position position="9"/>
    </location>
    <ligand>
        <name>substrate</name>
    </ligand>
</feature>
<feature type="binding site" evidence="1">
    <location>
        <position position="17"/>
    </location>
    <ligand>
        <name>ATP</name>
        <dbReference type="ChEBI" id="CHEBI:30616"/>
    </ligand>
</feature>
<feature type="binding site" evidence="1">
    <location>
        <position position="41"/>
    </location>
    <ligand>
        <name>substrate</name>
    </ligand>
</feature>
<feature type="binding site" evidence="1">
    <location>
        <position position="73"/>
    </location>
    <ligand>
        <name>substrate</name>
    </ligand>
</feature>
<feature type="binding site" evidence="1">
    <location>
        <position position="87"/>
    </location>
    <ligand>
        <name>substrate</name>
    </ligand>
</feature>
<feature type="binding site" evidence="1">
    <location>
        <begin position="88"/>
        <end position="90"/>
    </location>
    <ligand>
        <name>ATP</name>
        <dbReference type="ChEBI" id="CHEBI:30616"/>
    </ligand>
</feature>
<feature type="binding site" evidence="1">
    <location>
        <position position="98"/>
    </location>
    <ligand>
        <name>ATP</name>
        <dbReference type="ChEBI" id="CHEBI:30616"/>
    </ligand>
</feature>
<feature type="binding site" evidence="1">
    <location>
        <begin position="123"/>
        <end position="129"/>
    </location>
    <ligand>
        <name>ATP</name>
        <dbReference type="ChEBI" id="CHEBI:30616"/>
    </ligand>
</feature>
<feature type="site" description="Transition state stabilizer" evidence="1">
    <location>
        <position position="17"/>
    </location>
</feature>
<gene>
    <name evidence="1" type="primary">coaD</name>
    <name type="ordered locus">Teth39_1300</name>
</gene>
<organism>
    <name type="scientific">Thermoanaerobacter pseudethanolicus (strain ATCC 33223 / 39E)</name>
    <name type="common">Clostridium thermohydrosulfuricum</name>
    <dbReference type="NCBI Taxonomy" id="340099"/>
    <lineage>
        <taxon>Bacteria</taxon>
        <taxon>Bacillati</taxon>
        <taxon>Bacillota</taxon>
        <taxon>Clostridia</taxon>
        <taxon>Thermoanaerobacterales</taxon>
        <taxon>Thermoanaerobacteraceae</taxon>
        <taxon>Thermoanaerobacter</taxon>
    </lineage>
</organism>
<keyword id="KW-0067">ATP-binding</keyword>
<keyword id="KW-0173">Coenzyme A biosynthesis</keyword>
<keyword id="KW-0963">Cytoplasm</keyword>
<keyword id="KW-0460">Magnesium</keyword>
<keyword id="KW-0547">Nucleotide-binding</keyword>
<keyword id="KW-0548">Nucleotidyltransferase</keyword>
<keyword id="KW-1185">Reference proteome</keyword>
<keyword id="KW-0808">Transferase</keyword>
<proteinExistence type="inferred from homology"/>
<protein>
    <recommendedName>
        <fullName evidence="1">Phosphopantetheine adenylyltransferase</fullName>
        <ecNumber evidence="1">2.7.7.3</ecNumber>
    </recommendedName>
    <alternativeName>
        <fullName evidence="1">Dephospho-CoA pyrophosphorylase</fullName>
    </alternativeName>
    <alternativeName>
        <fullName evidence="1">Pantetheine-phosphate adenylyltransferase</fullName>
        <shortName evidence="1">PPAT</shortName>
    </alternativeName>
</protein>